<sequence>MKIALDAMGGDYAPIETVKGALEAIKESNISVVLVGKEEEIKKILQDYHYNESKIEIVHAEEVIEMHEHPAFAVKEKEDSSIVKAIKLLKEKKVDGVVSAGNTGAVMSSALLYLGRIRGIKRPAISTLIPTLTQIPSIILDIGANVDCKKEYLEQFALMGKVYMEEIFNVKNPKIALLNIGEEEGKGNQLVQETYTLLKNNPLFNFIGNVEGKDLFKGTANVIVCDGFVGNVAIKTAEGVAETLFDLLSSEIKSSLWSIILGLLLKPKFKNVKKKLDYSEFGGAPLLGVDGTVIISHGRSKAKAIKNALKVAEKMVKLEVNKKILEGLNKITDRGD</sequence>
<proteinExistence type="inferred from homology"/>
<gene>
    <name evidence="1" type="primary">plsX</name>
    <name type="ordered locus">Dtur_1447</name>
</gene>
<protein>
    <recommendedName>
        <fullName evidence="1">Phosphate acyltransferase</fullName>
        <ecNumber evidence="1">2.3.1.274</ecNumber>
    </recommendedName>
    <alternativeName>
        <fullName evidence="1">Acyl-ACP phosphotransacylase</fullName>
    </alternativeName>
    <alternativeName>
        <fullName evidence="1">Acyl-[acyl-carrier-protein]--phosphate acyltransferase</fullName>
    </alternativeName>
    <alternativeName>
        <fullName evidence="1">Phosphate-acyl-ACP acyltransferase</fullName>
    </alternativeName>
</protein>
<organism>
    <name type="scientific">Dictyoglomus turgidum (strain DSM 6724 / Z-1310)</name>
    <dbReference type="NCBI Taxonomy" id="515635"/>
    <lineage>
        <taxon>Bacteria</taxon>
        <taxon>Pseudomonadati</taxon>
        <taxon>Dictyoglomota</taxon>
        <taxon>Dictyoglomia</taxon>
        <taxon>Dictyoglomales</taxon>
        <taxon>Dictyoglomaceae</taxon>
        <taxon>Dictyoglomus</taxon>
    </lineage>
</organism>
<reference key="1">
    <citation type="journal article" date="2016" name="Front. Microbiol.">
        <title>The complete genome sequence of hyperthermophile Dictyoglomus turgidum DSM 6724 reveals a specialized carbohydrate fermentor.</title>
        <authorList>
            <person name="Brumm P.J."/>
            <person name="Gowda K."/>
            <person name="Robb F.T."/>
            <person name="Mead D.A."/>
        </authorList>
    </citation>
    <scope>NUCLEOTIDE SEQUENCE [LARGE SCALE GENOMIC DNA]</scope>
    <source>
        <strain>DSM 6724 / Z-1310</strain>
    </source>
</reference>
<keyword id="KW-0963">Cytoplasm</keyword>
<keyword id="KW-0444">Lipid biosynthesis</keyword>
<keyword id="KW-0443">Lipid metabolism</keyword>
<keyword id="KW-0594">Phospholipid biosynthesis</keyword>
<keyword id="KW-1208">Phospholipid metabolism</keyword>
<keyword id="KW-1185">Reference proteome</keyword>
<keyword id="KW-0808">Transferase</keyword>
<evidence type="ECO:0000255" key="1">
    <source>
        <dbReference type="HAMAP-Rule" id="MF_00019"/>
    </source>
</evidence>
<accession>B8E0Y4</accession>
<name>PLSX_DICTD</name>
<dbReference type="EC" id="2.3.1.274" evidence="1"/>
<dbReference type="EMBL" id="CP001251">
    <property type="protein sequence ID" value="ACK42721.1"/>
    <property type="molecule type" value="Genomic_DNA"/>
</dbReference>
<dbReference type="RefSeq" id="WP_012583799.1">
    <property type="nucleotide sequence ID" value="NC_011661.1"/>
</dbReference>
<dbReference type="RefSeq" id="YP_002353335.1">
    <property type="nucleotide sequence ID" value="NC_011661.1"/>
</dbReference>
<dbReference type="SMR" id="B8E0Y4"/>
<dbReference type="FunCoup" id="B8E0Y4">
    <property type="interactions" value="259"/>
</dbReference>
<dbReference type="STRING" id="515635.Dtur_1447"/>
<dbReference type="EnsemblBacteria" id="ACK42721">
    <property type="protein sequence ID" value="ACK42721"/>
    <property type="gene ID" value="Dtur_1447"/>
</dbReference>
<dbReference type="KEGG" id="dtu:Dtur_1447"/>
<dbReference type="PATRIC" id="fig|515635.4.peg.1494"/>
<dbReference type="eggNOG" id="COG0416">
    <property type="taxonomic scope" value="Bacteria"/>
</dbReference>
<dbReference type="HOGENOM" id="CLU_039379_1_1_0"/>
<dbReference type="InParanoid" id="B8E0Y4"/>
<dbReference type="OrthoDB" id="9806408at2"/>
<dbReference type="UniPathway" id="UPA00085"/>
<dbReference type="Proteomes" id="UP000007719">
    <property type="component" value="Chromosome"/>
</dbReference>
<dbReference type="GO" id="GO:0005737">
    <property type="term" value="C:cytoplasm"/>
    <property type="evidence" value="ECO:0007669"/>
    <property type="project" value="UniProtKB-SubCell"/>
</dbReference>
<dbReference type="GO" id="GO:0043811">
    <property type="term" value="F:phosphate:acyl-[acyl carrier protein] acyltransferase activity"/>
    <property type="evidence" value="ECO:0007669"/>
    <property type="project" value="UniProtKB-UniRule"/>
</dbReference>
<dbReference type="GO" id="GO:0006633">
    <property type="term" value="P:fatty acid biosynthetic process"/>
    <property type="evidence" value="ECO:0007669"/>
    <property type="project" value="UniProtKB-UniRule"/>
</dbReference>
<dbReference type="GO" id="GO:0008654">
    <property type="term" value="P:phospholipid biosynthetic process"/>
    <property type="evidence" value="ECO:0007669"/>
    <property type="project" value="UniProtKB-KW"/>
</dbReference>
<dbReference type="Gene3D" id="3.40.718.10">
    <property type="entry name" value="Isopropylmalate Dehydrogenase"/>
    <property type="match status" value="1"/>
</dbReference>
<dbReference type="HAMAP" id="MF_00019">
    <property type="entry name" value="PlsX"/>
    <property type="match status" value="1"/>
</dbReference>
<dbReference type="InterPro" id="IPR003664">
    <property type="entry name" value="FA_synthesis"/>
</dbReference>
<dbReference type="InterPro" id="IPR012281">
    <property type="entry name" value="Phospholipid_synth_PlsX-like"/>
</dbReference>
<dbReference type="NCBIfam" id="TIGR00182">
    <property type="entry name" value="plsX"/>
    <property type="match status" value="1"/>
</dbReference>
<dbReference type="PANTHER" id="PTHR30100">
    <property type="entry name" value="FATTY ACID/PHOSPHOLIPID SYNTHESIS PROTEIN PLSX"/>
    <property type="match status" value="1"/>
</dbReference>
<dbReference type="PANTHER" id="PTHR30100:SF1">
    <property type="entry name" value="PHOSPHATE ACYLTRANSFERASE"/>
    <property type="match status" value="1"/>
</dbReference>
<dbReference type="Pfam" id="PF02504">
    <property type="entry name" value="FA_synthesis"/>
    <property type="match status" value="1"/>
</dbReference>
<dbReference type="PIRSF" id="PIRSF002465">
    <property type="entry name" value="Phsphlp_syn_PlsX"/>
    <property type="match status" value="1"/>
</dbReference>
<dbReference type="SUPFAM" id="SSF53659">
    <property type="entry name" value="Isocitrate/Isopropylmalate dehydrogenase-like"/>
    <property type="match status" value="1"/>
</dbReference>
<comment type="function">
    <text evidence="1">Catalyzes the reversible formation of acyl-phosphate (acyl-PO(4)) from acyl-[acyl-carrier-protein] (acyl-ACP). This enzyme utilizes acyl-ACP as fatty acyl donor, but not acyl-CoA.</text>
</comment>
<comment type="catalytic activity">
    <reaction evidence="1">
        <text>a fatty acyl-[ACP] + phosphate = an acyl phosphate + holo-[ACP]</text>
        <dbReference type="Rhea" id="RHEA:42292"/>
        <dbReference type="Rhea" id="RHEA-COMP:9685"/>
        <dbReference type="Rhea" id="RHEA-COMP:14125"/>
        <dbReference type="ChEBI" id="CHEBI:43474"/>
        <dbReference type="ChEBI" id="CHEBI:59918"/>
        <dbReference type="ChEBI" id="CHEBI:64479"/>
        <dbReference type="ChEBI" id="CHEBI:138651"/>
        <dbReference type="EC" id="2.3.1.274"/>
    </reaction>
</comment>
<comment type="pathway">
    <text evidence="1">Lipid metabolism; phospholipid metabolism.</text>
</comment>
<comment type="subunit">
    <text evidence="1">Homodimer. Probably interacts with PlsY.</text>
</comment>
<comment type="subcellular location">
    <subcellularLocation>
        <location evidence="1">Cytoplasm</location>
    </subcellularLocation>
    <text evidence="1">Associated with the membrane possibly through PlsY.</text>
</comment>
<comment type="similarity">
    <text evidence="1">Belongs to the PlsX family.</text>
</comment>
<feature type="chain" id="PRO_1000116375" description="Phosphate acyltransferase">
    <location>
        <begin position="1"/>
        <end position="336"/>
    </location>
</feature>